<organism>
    <name type="scientific">Bacillus velezensis (strain DSM 23117 / BGSC 10A6 / LMG 26770 / FZB42)</name>
    <name type="common">Bacillus amyloliquefaciens subsp. plantarum</name>
    <dbReference type="NCBI Taxonomy" id="326423"/>
    <lineage>
        <taxon>Bacteria</taxon>
        <taxon>Bacillati</taxon>
        <taxon>Bacillota</taxon>
        <taxon>Bacilli</taxon>
        <taxon>Bacillales</taxon>
        <taxon>Bacillaceae</taxon>
        <taxon>Bacillus</taxon>
        <taxon>Bacillus amyloliquefaciens group</taxon>
    </lineage>
</organism>
<protein>
    <recommendedName>
        <fullName evidence="2">Translation initiation factor IF-2</fullName>
    </recommendedName>
</protein>
<reference key="1">
    <citation type="journal article" date="2007" name="Nat. Biotechnol.">
        <title>Comparative analysis of the complete genome sequence of the plant growth-promoting bacterium Bacillus amyloliquefaciens FZB42.</title>
        <authorList>
            <person name="Chen X.H."/>
            <person name="Koumoutsi A."/>
            <person name="Scholz R."/>
            <person name="Eisenreich A."/>
            <person name="Schneider K."/>
            <person name="Heinemeyer I."/>
            <person name="Morgenstern B."/>
            <person name="Voss B."/>
            <person name="Hess W.R."/>
            <person name="Reva O."/>
            <person name="Junge H."/>
            <person name="Voigt B."/>
            <person name="Jungblut P.R."/>
            <person name="Vater J."/>
            <person name="Suessmuth R."/>
            <person name="Liesegang H."/>
            <person name="Strittmatter A."/>
            <person name="Gottschalk G."/>
            <person name="Borriss R."/>
        </authorList>
    </citation>
    <scope>NUCLEOTIDE SEQUENCE [LARGE SCALE GENOMIC DNA]</scope>
    <source>
        <strain>DSM 23117 / BGSC 10A6 / LMG 26770 / FZB42</strain>
    </source>
</reference>
<comment type="function">
    <text evidence="2">One of the essential components for the initiation of protein synthesis. Protects formylmethionyl-tRNA from spontaneous hydrolysis and promotes its binding to the 30S ribosomal subunits. Also involved in the hydrolysis of GTP during the formation of the 70S ribosomal complex.</text>
</comment>
<comment type="subcellular location">
    <subcellularLocation>
        <location evidence="2">Cytoplasm</location>
    </subcellularLocation>
</comment>
<comment type="similarity">
    <text evidence="2">Belongs to the TRAFAC class translation factor GTPase superfamily. Classic translation factor GTPase family. IF-2 subfamily.</text>
</comment>
<keyword id="KW-0963">Cytoplasm</keyword>
<keyword id="KW-0342">GTP-binding</keyword>
<keyword id="KW-0396">Initiation factor</keyword>
<keyword id="KW-0547">Nucleotide-binding</keyword>
<keyword id="KW-0648">Protein biosynthesis</keyword>
<proteinExistence type="inferred from homology"/>
<evidence type="ECO:0000250" key="1"/>
<evidence type="ECO:0000255" key="2">
    <source>
        <dbReference type="HAMAP-Rule" id="MF_00100"/>
    </source>
</evidence>
<evidence type="ECO:0000256" key="3">
    <source>
        <dbReference type="SAM" id="MobiDB-lite"/>
    </source>
</evidence>
<feature type="chain" id="PRO_1000008199" description="Translation initiation factor IF-2">
    <location>
        <begin position="1"/>
        <end position="716"/>
    </location>
</feature>
<feature type="domain" description="tr-type G">
    <location>
        <begin position="217"/>
        <end position="386"/>
    </location>
</feature>
<feature type="region of interest" description="Disordered" evidence="3">
    <location>
        <begin position="53"/>
        <end position="135"/>
    </location>
</feature>
<feature type="region of interest" description="G1" evidence="1">
    <location>
        <begin position="226"/>
        <end position="233"/>
    </location>
</feature>
<feature type="region of interest" description="G2" evidence="1">
    <location>
        <begin position="251"/>
        <end position="255"/>
    </location>
</feature>
<feature type="region of interest" description="G3" evidence="1">
    <location>
        <begin position="272"/>
        <end position="275"/>
    </location>
</feature>
<feature type="region of interest" description="G4" evidence="1">
    <location>
        <begin position="326"/>
        <end position="329"/>
    </location>
</feature>
<feature type="region of interest" description="G5" evidence="1">
    <location>
        <begin position="362"/>
        <end position="364"/>
    </location>
</feature>
<feature type="compositionally biased region" description="Polar residues" evidence="3">
    <location>
        <begin position="57"/>
        <end position="83"/>
    </location>
</feature>
<feature type="compositionally biased region" description="Low complexity" evidence="3">
    <location>
        <begin position="93"/>
        <end position="109"/>
    </location>
</feature>
<feature type="binding site" evidence="2">
    <location>
        <begin position="226"/>
        <end position="233"/>
    </location>
    <ligand>
        <name>GTP</name>
        <dbReference type="ChEBI" id="CHEBI:37565"/>
    </ligand>
</feature>
<feature type="binding site" evidence="2">
    <location>
        <begin position="272"/>
        <end position="276"/>
    </location>
    <ligand>
        <name>GTP</name>
        <dbReference type="ChEBI" id="CHEBI:37565"/>
    </ligand>
</feature>
<feature type="binding site" evidence="2">
    <location>
        <begin position="326"/>
        <end position="329"/>
    </location>
    <ligand>
        <name>GTP</name>
        <dbReference type="ChEBI" id="CHEBI:37565"/>
    </ligand>
</feature>
<sequence length="716" mass="78596">MAKMRVYEYAKAINVSSKEILTALKNMDIVVNNHMAMLEEKTIKQLDAKFKKGGAGVTSQKPAETNKNKPQGINQQPAGNQPNKIRDGKKNDVQNNQFNKNKKNNNNNKNKNKRNHNNKNQYQQKPLKPKKELPEKITFSGSLTVGALAEELGKEPSELIKKLMLLGVMATINQELDKDTIELIASEYGVETEEVIVLEETELEKYEEADKEEDLQIRPPVVTIMGHVDHGKTTLLDSIRKTKVVEGEAGGITQHIGAYQIEENGKKITFLDTPGHAAFTTMRARGAEVTDITILVVAADDGVMPQTVEAINHAKAAEVPIIVAVNKVDKESANPDRVMQELTEYGLVPEAWGGETIFVPLSALTGKGIDELVEMILLVSEVEELKANPNRQAKGTVIEAELDKGRGSVATLLVQTGTLNVGDPIVVGNTFGRVRAMVNDLGRRVKTAGPSTPVEITGLNDVPQAGDQFLVFKDEKTARSVGEARASKQLEEQRSDKAKLSLDDLFEQIKQGDVKDINLIVKADVQGSAEALTAALQKIEVEGVKVKIIHTGVGAITESDIILASASNAIVIGFNVRPDGNAKSTAEAENVDIRLHRIIYKVIEEIEAAMKGMLDPEYEEKVIGQVEVRQTFKVSKIGTIAGGYVTDGHITRDSGLRLIRDGVVIFEGEVDVLKRFKDDVKEVSQGYECGITIKKYNDIREGDIIEAYVMQEIERK</sequence>
<accession>A7Z4T4</accession>
<gene>
    <name evidence="2" type="primary">infB</name>
    <name type="ordered locus">RBAM_016470</name>
</gene>
<dbReference type="EMBL" id="CP000560">
    <property type="protein sequence ID" value="ABS74010.1"/>
    <property type="molecule type" value="Genomic_DNA"/>
</dbReference>
<dbReference type="RefSeq" id="WP_007611462.1">
    <property type="nucleotide sequence ID" value="NC_009725.2"/>
</dbReference>
<dbReference type="SMR" id="A7Z4T4"/>
<dbReference type="GeneID" id="93080780"/>
<dbReference type="KEGG" id="bay:RBAM_016470"/>
<dbReference type="HOGENOM" id="CLU_006301_5_1_9"/>
<dbReference type="Proteomes" id="UP000001120">
    <property type="component" value="Chromosome"/>
</dbReference>
<dbReference type="GO" id="GO:0005829">
    <property type="term" value="C:cytosol"/>
    <property type="evidence" value="ECO:0007669"/>
    <property type="project" value="TreeGrafter"/>
</dbReference>
<dbReference type="GO" id="GO:0005525">
    <property type="term" value="F:GTP binding"/>
    <property type="evidence" value="ECO:0007669"/>
    <property type="project" value="UniProtKB-KW"/>
</dbReference>
<dbReference type="GO" id="GO:0003924">
    <property type="term" value="F:GTPase activity"/>
    <property type="evidence" value="ECO:0007669"/>
    <property type="project" value="UniProtKB-UniRule"/>
</dbReference>
<dbReference type="GO" id="GO:0003743">
    <property type="term" value="F:translation initiation factor activity"/>
    <property type="evidence" value="ECO:0007669"/>
    <property type="project" value="UniProtKB-UniRule"/>
</dbReference>
<dbReference type="CDD" id="cd01887">
    <property type="entry name" value="IF2_eIF5B"/>
    <property type="match status" value="1"/>
</dbReference>
<dbReference type="CDD" id="cd03702">
    <property type="entry name" value="IF2_mtIF2_II"/>
    <property type="match status" value="1"/>
</dbReference>
<dbReference type="CDD" id="cd03692">
    <property type="entry name" value="mtIF2_IVc"/>
    <property type="match status" value="1"/>
</dbReference>
<dbReference type="FunFam" id="2.40.30.10:FF:000007">
    <property type="entry name" value="Translation initiation factor IF-2"/>
    <property type="match status" value="1"/>
</dbReference>
<dbReference type="FunFam" id="2.40.30.10:FF:000008">
    <property type="entry name" value="Translation initiation factor IF-2"/>
    <property type="match status" value="1"/>
</dbReference>
<dbReference type="FunFam" id="3.40.50.10050:FF:000001">
    <property type="entry name" value="Translation initiation factor IF-2"/>
    <property type="match status" value="1"/>
</dbReference>
<dbReference type="FunFam" id="3.40.50.300:FF:000019">
    <property type="entry name" value="Translation initiation factor IF-2"/>
    <property type="match status" value="1"/>
</dbReference>
<dbReference type="Gene3D" id="1.10.10.2480">
    <property type="match status" value="1"/>
</dbReference>
<dbReference type="Gene3D" id="3.40.50.300">
    <property type="entry name" value="P-loop containing nucleotide triphosphate hydrolases"/>
    <property type="match status" value="1"/>
</dbReference>
<dbReference type="Gene3D" id="2.40.30.10">
    <property type="entry name" value="Translation factors"/>
    <property type="match status" value="2"/>
</dbReference>
<dbReference type="Gene3D" id="3.40.50.10050">
    <property type="entry name" value="Translation initiation factor IF- 2, domain 3"/>
    <property type="match status" value="1"/>
</dbReference>
<dbReference type="HAMAP" id="MF_00100_B">
    <property type="entry name" value="IF_2_B"/>
    <property type="match status" value="1"/>
</dbReference>
<dbReference type="InterPro" id="IPR053905">
    <property type="entry name" value="EF-G-like_DII"/>
</dbReference>
<dbReference type="InterPro" id="IPR044145">
    <property type="entry name" value="IF2_II"/>
</dbReference>
<dbReference type="InterPro" id="IPR006847">
    <property type="entry name" value="IF2_N"/>
</dbReference>
<dbReference type="InterPro" id="IPR027417">
    <property type="entry name" value="P-loop_NTPase"/>
</dbReference>
<dbReference type="InterPro" id="IPR005225">
    <property type="entry name" value="Small_GTP-bd"/>
</dbReference>
<dbReference type="InterPro" id="IPR000795">
    <property type="entry name" value="T_Tr_GTP-bd_dom"/>
</dbReference>
<dbReference type="InterPro" id="IPR000178">
    <property type="entry name" value="TF_IF2_bacterial-like"/>
</dbReference>
<dbReference type="InterPro" id="IPR015760">
    <property type="entry name" value="TIF_IF2"/>
</dbReference>
<dbReference type="InterPro" id="IPR023115">
    <property type="entry name" value="TIF_IF2_dom3"/>
</dbReference>
<dbReference type="InterPro" id="IPR036925">
    <property type="entry name" value="TIF_IF2_dom3_sf"/>
</dbReference>
<dbReference type="InterPro" id="IPR009000">
    <property type="entry name" value="Transl_B-barrel_sf"/>
</dbReference>
<dbReference type="NCBIfam" id="TIGR00487">
    <property type="entry name" value="IF-2"/>
    <property type="match status" value="1"/>
</dbReference>
<dbReference type="NCBIfam" id="TIGR00231">
    <property type="entry name" value="small_GTP"/>
    <property type="match status" value="1"/>
</dbReference>
<dbReference type="PANTHER" id="PTHR43381:SF5">
    <property type="entry name" value="TR-TYPE G DOMAIN-CONTAINING PROTEIN"/>
    <property type="match status" value="1"/>
</dbReference>
<dbReference type="PANTHER" id="PTHR43381">
    <property type="entry name" value="TRANSLATION INITIATION FACTOR IF-2-RELATED"/>
    <property type="match status" value="1"/>
</dbReference>
<dbReference type="Pfam" id="PF22042">
    <property type="entry name" value="EF-G_D2"/>
    <property type="match status" value="1"/>
</dbReference>
<dbReference type="Pfam" id="PF00009">
    <property type="entry name" value="GTP_EFTU"/>
    <property type="match status" value="1"/>
</dbReference>
<dbReference type="Pfam" id="PF11987">
    <property type="entry name" value="IF-2"/>
    <property type="match status" value="1"/>
</dbReference>
<dbReference type="Pfam" id="PF04760">
    <property type="entry name" value="IF2_N"/>
    <property type="match status" value="2"/>
</dbReference>
<dbReference type="SUPFAM" id="SSF52156">
    <property type="entry name" value="Initiation factor IF2/eIF5b, domain 3"/>
    <property type="match status" value="1"/>
</dbReference>
<dbReference type="SUPFAM" id="SSF52540">
    <property type="entry name" value="P-loop containing nucleoside triphosphate hydrolases"/>
    <property type="match status" value="1"/>
</dbReference>
<dbReference type="SUPFAM" id="SSF50447">
    <property type="entry name" value="Translation proteins"/>
    <property type="match status" value="2"/>
</dbReference>
<dbReference type="PROSITE" id="PS51722">
    <property type="entry name" value="G_TR_2"/>
    <property type="match status" value="1"/>
</dbReference>
<dbReference type="PROSITE" id="PS01176">
    <property type="entry name" value="IF2"/>
    <property type="match status" value="1"/>
</dbReference>
<name>IF2_BACVZ</name>